<name>HMOX_TAKRU</name>
<gene>
    <name type="primary">hmox</name>
</gene>
<dbReference type="EC" id="1.14.14.18" evidence="2"/>
<dbReference type="EMBL" id="AF022814">
    <property type="protein sequence ID" value="AAC41263.1"/>
    <property type="molecule type" value="Genomic_DNA"/>
</dbReference>
<dbReference type="SMR" id="O73688"/>
<dbReference type="FunCoup" id="O73688">
    <property type="interactions" value="1"/>
</dbReference>
<dbReference type="STRING" id="31033.ENSTRUP00000061528"/>
<dbReference type="eggNOG" id="KOG4480">
    <property type="taxonomic scope" value="Eukaryota"/>
</dbReference>
<dbReference type="InParanoid" id="O73688"/>
<dbReference type="Proteomes" id="UP000005226">
    <property type="component" value="Unplaced"/>
</dbReference>
<dbReference type="GO" id="GO:0005783">
    <property type="term" value="C:endoplasmic reticulum"/>
    <property type="evidence" value="ECO:0007669"/>
    <property type="project" value="UniProtKB-SubCell"/>
</dbReference>
<dbReference type="GO" id="GO:0020037">
    <property type="term" value="F:heme binding"/>
    <property type="evidence" value="ECO:0007669"/>
    <property type="project" value="TreeGrafter"/>
</dbReference>
<dbReference type="GO" id="GO:0004392">
    <property type="term" value="F:heme oxygenase (decyclizing) activity"/>
    <property type="evidence" value="ECO:0007669"/>
    <property type="project" value="UniProtKB-EC"/>
</dbReference>
<dbReference type="GO" id="GO:0046872">
    <property type="term" value="F:metal ion binding"/>
    <property type="evidence" value="ECO:0007669"/>
    <property type="project" value="UniProtKB-KW"/>
</dbReference>
<dbReference type="GO" id="GO:0042167">
    <property type="term" value="P:heme catabolic process"/>
    <property type="evidence" value="ECO:0007669"/>
    <property type="project" value="TreeGrafter"/>
</dbReference>
<dbReference type="GO" id="GO:0006788">
    <property type="term" value="P:heme oxidation"/>
    <property type="evidence" value="ECO:0007669"/>
    <property type="project" value="InterPro"/>
</dbReference>
<dbReference type="GO" id="GO:0006979">
    <property type="term" value="P:response to oxidative stress"/>
    <property type="evidence" value="ECO:0007669"/>
    <property type="project" value="TreeGrafter"/>
</dbReference>
<dbReference type="CDD" id="cd19165">
    <property type="entry name" value="HemeO"/>
    <property type="match status" value="1"/>
</dbReference>
<dbReference type="FunFam" id="1.20.910.10:FF:000001">
    <property type="entry name" value="Heme oxygenase 1"/>
    <property type="match status" value="1"/>
</dbReference>
<dbReference type="Gene3D" id="1.20.910.10">
    <property type="entry name" value="Heme oxygenase-like"/>
    <property type="match status" value="1"/>
</dbReference>
<dbReference type="InterPro" id="IPR002051">
    <property type="entry name" value="Haem_Oase"/>
</dbReference>
<dbReference type="InterPro" id="IPR016053">
    <property type="entry name" value="Haem_Oase-like"/>
</dbReference>
<dbReference type="InterPro" id="IPR016084">
    <property type="entry name" value="Haem_Oase-like_multi-hlx"/>
</dbReference>
<dbReference type="InterPro" id="IPR018207">
    <property type="entry name" value="Haem_oxygenase_CS"/>
</dbReference>
<dbReference type="PANTHER" id="PTHR10720">
    <property type="entry name" value="HEME OXYGENASE"/>
    <property type="match status" value="1"/>
</dbReference>
<dbReference type="PANTHER" id="PTHR10720:SF1">
    <property type="entry name" value="HEME OXYGENASE 1"/>
    <property type="match status" value="1"/>
</dbReference>
<dbReference type="Pfam" id="PF01126">
    <property type="entry name" value="Heme_oxygenase"/>
    <property type="match status" value="1"/>
</dbReference>
<dbReference type="PIRSF" id="PIRSF000343">
    <property type="entry name" value="Haem_Oase"/>
    <property type="match status" value="1"/>
</dbReference>
<dbReference type="PRINTS" id="PR00088">
    <property type="entry name" value="HAEMOXYGNASE"/>
</dbReference>
<dbReference type="SUPFAM" id="SSF48613">
    <property type="entry name" value="Heme oxygenase-like"/>
    <property type="match status" value="1"/>
</dbReference>
<dbReference type="PROSITE" id="PS00593">
    <property type="entry name" value="HEME_OXYGENASE"/>
    <property type="match status" value="1"/>
</dbReference>
<sequence length="277" mass="31211">MEADKKTTAQTESNRDLSEQIKKVTKDVHVRAESTELMLSFQRGQVTLQQYKLLLCSLYEIYLALEEEMDRNCDHPSVAPIYFPAELARLATIEKDLEFFFGPDWREKIVVPAATERYCHRIRQIGQENPEYLIAHAYTRYLGDLSGGQVLGRIAQKSMKLGGSEGLSFFAFPGVSSPNLFKRLYRSRMNSVELTEEQRSAVLQEALGAFEFNIQVFEDLQKMLNVTENEPGVGTPRSRPATTLQVGGSMIQTNPLFRMVLGLCLALATVSIGLYAL</sequence>
<comment type="function">
    <text evidence="1">Heme oxygenase cleaves the heme ring at the alpha methene bridge to form biliverdin. Biliverdin is subsequently converted to bilirubin by biliverdin reductase. Under physiological conditions, the activity of heme oxygenase is highest in the spleen, where senescent erythrocytes are sequestrated and destroyed.</text>
</comment>
<comment type="catalytic activity">
    <reaction evidence="2">
        <text>heme b + 3 reduced [NADPH--hemoprotein reductase] + 3 O2 = biliverdin IXalpha + CO + Fe(2+) + 3 oxidized [NADPH--hemoprotein reductase] + 3 H2O + H(+)</text>
        <dbReference type="Rhea" id="RHEA:21764"/>
        <dbReference type="Rhea" id="RHEA-COMP:11964"/>
        <dbReference type="Rhea" id="RHEA-COMP:11965"/>
        <dbReference type="ChEBI" id="CHEBI:15377"/>
        <dbReference type="ChEBI" id="CHEBI:15378"/>
        <dbReference type="ChEBI" id="CHEBI:15379"/>
        <dbReference type="ChEBI" id="CHEBI:17245"/>
        <dbReference type="ChEBI" id="CHEBI:29033"/>
        <dbReference type="ChEBI" id="CHEBI:57618"/>
        <dbReference type="ChEBI" id="CHEBI:57991"/>
        <dbReference type="ChEBI" id="CHEBI:58210"/>
        <dbReference type="ChEBI" id="CHEBI:60344"/>
        <dbReference type="EC" id="1.14.14.18"/>
    </reaction>
</comment>
<comment type="subcellular location">
    <subcellularLocation>
        <location evidence="1">Microsome</location>
    </subcellularLocation>
    <subcellularLocation>
        <location evidence="1">Endoplasmic reticulum</location>
    </subcellularLocation>
</comment>
<comment type="similarity">
    <text evidence="3">Belongs to the heme oxygenase family.</text>
</comment>
<feature type="chain" id="PRO_0000209697" description="Heme oxygenase">
    <location>
        <begin position="1"/>
        <end position="277"/>
    </location>
</feature>
<feature type="binding site" description="axial binding residue" evidence="1">
    <location>
        <position position="29"/>
    </location>
    <ligand>
        <name>heme b</name>
        <dbReference type="ChEBI" id="CHEBI:60344"/>
    </ligand>
    <ligandPart>
        <name>Fe</name>
        <dbReference type="ChEBI" id="CHEBI:18248"/>
    </ligandPart>
</feature>
<accession>O73688</accession>
<organism>
    <name type="scientific">Takifugu rubripes</name>
    <name type="common">Japanese pufferfish</name>
    <name type="synonym">Fugu rubripes</name>
    <dbReference type="NCBI Taxonomy" id="31033"/>
    <lineage>
        <taxon>Eukaryota</taxon>
        <taxon>Metazoa</taxon>
        <taxon>Chordata</taxon>
        <taxon>Craniata</taxon>
        <taxon>Vertebrata</taxon>
        <taxon>Euteleostomi</taxon>
        <taxon>Actinopterygii</taxon>
        <taxon>Neopterygii</taxon>
        <taxon>Teleostei</taxon>
        <taxon>Neoteleostei</taxon>
        <taxon>Acanthomorphata</taxon>
        <taxon>Eupercaria</taxon>
        <taxon>Tetraodontiformes</taxon>
        <taxon>Tetradontoidea</taxon>
        <taxon>Tetraodontidae</taxon>
        <taxon>Takifugu</taxon>
    </lineage>
</organism>
<protein>
    <recommendedName>
        <fullName>Heme oxygenase</fullName>
        <shortName>HO</shortName>
        <ecNumber evidence="2">1.14.14.18</ecNumber>
    </recommendedName>
</protein>
<reference key="1">
    <citation type="journal article" date="1998" name="Genomics">
        <title>The pufferfish SLP-1 gene, a new member of the SCL/TAL-1 family of transcription factors.</title>
        <authorList>
            <person name="Gottgens B."/>
            <person name="Gilbert J.G.R."/>
            <person name="Barton L.M."/>
            <person name="Aparicio S."/>
            <person name="Hawker K."/>
            <person name="Mistry S."/>
            <person name="Vaudin M."/>
            <person name="King A."/>
            <person name="Bentley D."/>
            <person name="Elgar G."/>
            <person name="Green A.R."/>
        </authorList>
    </citation>
    <scope>NUCLEOTIDE SEQUENCE [GENOMIC DNA]</scope>
</reference>
<proteinExistence type="inferred from homology"/>
<evidence type="ECO:0000250" key="1"/>
<evidence type="ECO:0000250" key="2">
    <source>
        <dbReference type="UniProtKB" id="O48782"/>
    </source>
</evidence>
<evidence type="ECO:0000305" key="3"/>
<keyword id="KW-0256">Endoplasmic reticulum</keyword>
<keyword id="KW-0349">Heme</keyword>
<keyword id="KW-0408">Iron</keyword>
<keyword id="KW-0479">Metal-binding</keyword>
<keyword id="KW-0492">Microsome</keyword>
<keyword id="KW-0560">Oxidoreductase</keyword>
<keyword id="KW-1185">Reference proteome</keyword>